<comment type="subunit">
    <text evidence="1 2">Component of the mitochondrial ribosome small subunit (28S) which comprises a 12S rRNA and about 30 distinct proteins (By similarity). Interacts with LIAT1 (By similarity).</text>
</comment>
<comment type="subcellular location">
    <subcellularLocation>
        <location evidence="1">Mitochondrion</location>
    </subcellularLocation>
</comment>
<comment type="similarity">
    <text evidence="4">Belongs to the universal ribosomal protein uS14 family.</text>
</comment>
<sequence length="199" mass="23414">MLRALRGAADLLSTALYKNEMMMSRRYLSTPAPEPAKPSSEETTESTEPATSVEDAGEPMKEKRITQPYSSEALTKLKLDQYPLYVEREWWKTGKRMTFWASWRQLRDVKRREQIQEVGADRMRLKAIKFNTILPQAIRDEAAEKMQKARKYDHPRLILNMCQFTGRQRGKIKPYRLSRHLFRRFADRSALSGVQRAMW</sequence>
<feature type="chain" id="PRO_0000131011" description="Small ribosomal subunit protein uS14m">
    <location>
        <begin position="1"/>
        <end position="199"/>
    </location>
</feature>
<feature type="region of interest" description="Disordered" evidence="3">
    <location>
        <begin position="28"/>
        <end position="67"/>
    </location>
</feature>
<reference key="1">
    <citation type="journal article" date="1998" name="Science">
        <title>Genome sequence of the nematode C. elegans: a platform for investigating biology.</title>
        <authorList>
            <consortium name="The C. elegans sequencing consortium"/>
        </authorList>
    </citation>
    <scope>NUCLEOTIDE SEQUENCE [LARGE SCALE GENOMIC DNA]</scope>
    <source>
        <strain>Bristol N2</strain>
    </source>
</reference>
<gene>
    <name type="primary">mrps-14</name>
    <name type="ORF">T01E8.6</name>
</gene>
<accession>P49391</accession>
<keyword id="KW-0496">Mitochondrion</keyword>
<keyword id="KW-1185">Reference proteome</keyword>
<keyword id="KW-0687">Ribonucleoprotein</keyword>
<keyword id="KW-0689">Ribosomal protein</keyword>
<protein>
    <recommendedName>
        <fullName evidence="4">Small ribosomal subunit protein uS14m</fullName>
    </recommendedName>
    <alternativeName>
        <fullName evidence="4">40S ribosomal protein S14, mitochondrial</fullName>
        <shortName>MRP-S14</shortName>
        <shortName>S14mt</shortName>
    </alternativeName>
</protein>
<name>RT14_CAEEL</name>
<proteinExistence type="inferred from homology"/>
<dbReference type="EMBL" id="Z48809">
    <property type="protein sequence ID" value="CAA88746.2"/>
    <property type="molecule type" value="Genomic_DNA"/>
</dbReference>
<dbReference type="PIR" id="T24300">
    <property type="entry name" value="T24300"/>
</dbReference>
<dbReference type="RefSeq" id="NP_496208.2">
    <property type="nucleotide sequence ID" value="NM_063807.4"/>
</dbReference>
<dbReference type="SMR" id="P49391"/>
<dbReference type="BioGRID" id="39907">
    <property type="interactions" value="6"/>
</dbReference>
<dbReference type="FunCoup" id="P49391">
    <property type="interactions" value="1423"/>
</dbReference>
<dbReference type="IntAct" id="P49391">
    <property type="interactions" value="1"/>
</dbReference>
<dbReference type="STRING" id="6239.T01E8.6.1"/>
<dbReference type="PaxDb" id="6239-T01E8.6"/>
<dbReference type="PeptideAtlas" id="P49391"/>
<dbReference type="EnsemblMetazoa" id="T01E8.6.1">
    <property type="protein sequence ID" value="T01E8.6.1"/>
    <property type="gene ID" value="WBGene00011334"/>
</dbReference>
<dbReference type="GeneID" id="174588"/>
<dbReference type="KEGG" id="cel:CELE_T01E8.6"/>
<dbReference type="UCSC" id="T01E8.6.1">
    <property type="organism name" value="c. elegans"/>
</dbReference>
<dbReference type="AGR" id="WB:WBGene00011334"/>
<dbReference type="CTD" id="174588"/>
<dbReference type="WormBase" id="T01E8.6">
    <property type="protein sequence ID" value="CE32923"/>
    <property type="gene ID" value="WBGene00011334"/>
    <property type="gene designation" value="mrps-14"/>
</dbReference>
<dbReference type="eggNOG" id="KOG1741">
    <property type="taxonomic scope" value="Eukaryota"/>
</dbReference>
<dbReference type="GeneTree" id="ENSGT00390000015663"/>
<dbReference type="HOGENOM" id="CLU_109511_0_0_1"/>
<dbReference type="InParanoid" id="P49391"/>
<dbReference type="OMA" id="CMFTGRQ"/>
<dbReference type="OrthoDB" id="413436at2759"/>
<dbReference type="PhylomeDB" id="P49391"/>
<dbReference type="Reactome" id="R-CEL-5389840">
    <property type="pathway name" value="Mitochondrial translation elongation"/>
</dbReference>
<dbReference type="Reactome" id="R-CEL-5419276">
    <property type="pathway name" value="Mitochondrial translation termination"/>
</dbReference>
<dbReference type="PRO" id="PR:P49391"/>
<dbReference type="Proteomes" id="UP000001940">
    <property type="component" value="Chromosome II"/>
</dbReference>
<dbReference type="Bgee" id="WBGene00011334">
    <property type="expression patterns" value="Expressed in germ line (C elegans) and 4 other cell types or tissues"/>
</dbReference>
<dbReference type="GO" id="GO:0005763">
    <property type="term" value="C:mitochondrial small ribosomal subunit"/>
    <property type="evidence" value="ECO:0000250"/>
    <property type="project" value="UniProtKB"/>
</dbReference>
<dbReference type="GO" id="GO:0003735">
    <property type="term" value="F:structural constituent of ribosome"/>
    <property type="evidence" value="ECO:0000318"/>
    <property type="project" value="GO_Central"/>
</dbReference>
<dbReference type="GO" id="GO:0006412">
    <property type="term" value="P:translation"/>
    <property type="evidence" value="ECO:0000318"/>
    <property type="project" value="GO_Central"/>
</dbReference>
<dbReference type="FunFam" id="1.10.287.1480:FF:000002">
    <property type="entry name" value="Probable 40S ribosomal protein S14, mitochondrial"/>
    <property type="match status" value="1"/>
</dbReference>
<dbReference type="Gene3D" id="1.10.287.1480">
    <property type="match status" value="1"/>
</dbReference>
<dbReference type="InterPro" id="IPR001209">
    <property type="entry name" value="Ribosomal_uS14"/>
</dbReference>
<dbReference type="PANTHER" id="PTHR19836">
    <property type="entry name" value="30S RIBOSOMAL PROTEIN S14"/>
    <property type="match status" value="1"/>
</dbReference>
<dbReference type="PANTHER" id="PTHR19836:SF19">
    <property type="entry name" value="SMALL RIBOSOMAL SUBUNIT PROTEIN US14M"/>
    <property type="match status" value="1"/>
</dbReference>
<dbReference type="Pfam" id="PF00253">
    <property type="entry name" value="Ribosomal_S14"/>
    <property type="match status" value="1"/>
</dbReference>
<dbReference type="SUPFAM" id="SSF57716">
    <property type="entry name" value="Glucocorticoid receptor-like (DNA-binding domain)"/>
    <property type="match status" value="1"/>
</dbReference>
<evidence type="ECO:0000250" key="1">
    <source>
        <dbReference type="UniProtKB" id="O60783"/>
    </source>
</evidence>
<evidence type="ECO:0000250" key="2">
    <source>
        <dbReference type="UniProtKB" id="Q9CR88"/>
    </source>
</evidence>
<evidence type="ECO:0000256" key="3">
    <source>
        <dbReference type="SAM" id="MobiDB-lite"/>
    </source>
</evidence>
<evidence type="ECO:0000305" key="4"/>
<organism>
    <name type="scientific">Caenorhabditis elegans</name>
    <dbReference type="NCBI Taxonomy" id="6239"/>
    <lineage>
        <taxon>Eukaryota</taxon>
        <taxon>Metazoa</taxon>
        <taxon>Ecdysozoa</taxon>
        <taxon>Nematoda</taxon>
        <taxon>Chromadorea</taxon>
        <taxon>Rhabditida</taxon>
        <taxon>Rhabditina</taxon>
        <taxon>Rhabditomorpha</taxon>
        <taxon>Rhabditoidea</taxon>
        <taxon>Rhabditidae</taxon>
        <taxon>Peloderinae</taxon>
        <taxon>Caenorhabditis</taxon>
    </lineage>
</organism>